<dbReference type="EC" id="3.6.5.-" evidence="1"/>
<dbReference type="EMBL" id="CR378664">
    <property type="protein sequence ID" value="CAG18829.1"/>
    <property type="molecule type" value="Genomic_DNA"/>
</dbReference>
<dbReference type="RefSeq" id="WP_011217186.1">
    <property type="nucleotide sequence ID" value="NC_006370.1"/>
</dbReference>
<dbReference type="SMR" id="Q6LV46"/>
<dbReference type="STRING" id="298386.PBPRA0397"/>
<dbReference type="KEGG" id="ppr:PBPRA0397"/>
<dbReference type="eggNOG" id="COG0536">
    <property type="taxonomic scope" value="Bacteria"/>
</dbReference>
<dbReference type="HOGENOM" id="CLU_011747_2_0_6"/>
<dbReference type="Proteomes" id="UP000000593">
    <property type="component" value="Chromosome 1"/>
</dbReference>
<dbReference type="GO" id="GO:0005737">
    <property type="term" value="C:cytoplasm"/>
    <property type="evidence" value="ECO:0007669"/>
    <property type="project" value="UniProtKB-SubCell"/>
</dbReference>
<dbReference type="GO" id="GO:0005525">
    <property type="term" value="F:GTP binding"/>
    <property type="evidence" value="ECO:0007669"/>
    <property type="project" value="UniProtKB-UniRule"/>
</dbReference>
<dbReference type="GO" id="GO:0003924">
    <property type="term" value="F:GTPase activity"/>
    <property type="evidence" value="ECO:0007669"/>
    <property type="project" value="UniProtKB-UniRule"/>
</dbReference>
<dbReference type="GO" id="GO:0000287">
    <property type="term" value="F:magnesium ion binding"/>
    <property type="evidence" value="ECO:0007669"/>
    <property type="project" value="InterPro"/>
</dbReference>
<dbReference type="GO" id="GO:0042254">
    <property type="term" value="P:ribosome biogenesis"/>
    <property type="evidence" value="ECO:0007669"/>
    <property type="project" value="UniProtKB-UniRule"/>
</dbReference>
<dbReference type="CDD" id="cd01898">
    <property type="entry name" value="Obg"/>
    <property type="match status" value="1"/>
</dbReference>
<dbReference type="FunFam" id="2.70.210.12:FF:000001">
    <property type="entry name" value="GTPase Obg"/>
    <property type="match status" value="1"/>
</dbReference>
<dbReference type="Gene3D" id="2.70.210.12">
    <property type="entry name" value="GTP1/OBG domain"/>
    <property type="match status" value="1"/>
</dbReference>
<dbReference type="Gene3D" id="3.40.50.300">
    <property type="entry name" value="P-loop containing nucleotide triphosphate hydrolases"/>
    <property type="match status" value="1"/>
</dbReference>
<dbReference type="HAMAP" id="MF_01454">
    <property type="entry name" value="GTPase_Obg"/>
    <property type="match status" value="1"/>
</dbReference>
<dbReference type="InterPro" id="IPR031167">
    <property type="entry name" value="G_OBG"/>
</dbReference>
<dbReference type="InterPro" id="IPR006073">
    <property type="entry name" value="GTP-bd"/>
</dbReference>
<dbReference type="InterPro" id="IPR014100">
    <property type="entry name" value="GTP-bd_Obg/CgtA"/>
</dbReference>
<dbReference type="InterPro" id="IPR006074">
    <property type="entry name" value="GTP1-OBG_CS"/>
</dbReference>
<dbReference type="InterPro" id="IPR006169">
    <property type="entry name" value="GTP1_OBG_dom"/>
</dbReference>
<dbReference type="InterPro" id="IPR036726">
    <property type="entry name" value="GTP1_OBG_dom_sf"/>
</dbReference>
<dbReference type="InterPro" id="IPR045086">
    <property type="entry name" value="OBG_GTPase"/>
</dbReference>
<dbReference type="InterPro" id="IPR027417">
    <property type="entry name" value="P-loop_NTPase"/>
</dbReference>
<dbReference type="NCBIfam" id="TIGR02729">
    <property type="entry name" value="Obg_CgtA"/>
    <property type="match status" value="1"/>
</dbReference>
<dbReference type="NCBIfam" id="NF008955">
    <property type="entry name" value="PRK12297.1"/>
    <property type="match status" value="1"/>
</dbReference>
<dbReference type="NCBIfam" id="NF008956">
    <property type="entry name" value="PRK12299.1"/>
    <property type="match status" value="1"/>
</dbReference>
<dbReference type="PANTHER" id="PTHR11702">
    <property type="entry name" value="DEVELOPMENTALLY REGULATED GTP-BINDING PROTEIN-RELATED"/>
    <property type="match status" value="1"/>
</dbReference>
<dbReference type="PANTHER" id="PTHR11702:SF31">
    <property type="entry name" value="MITOCHONDRIAL RIBOSOME-ASSOCIATED GTPASE 2"/>
    <property type="match status" value="1"/>
</dbReference>
<dbReference type="Pfam" id="PF01018">
    <property type="entry name" value="GTP1_OBG"/>
    <property type="match status" value="1"/>
</dbReference>
<dbReference type="Pfam" id="PF01926">
    <property type="entry name" value="MMR_HSR1"/>
    <property type="match status" value="1"/>
</dbReference>
<dbReference type="PIRSF" id="PIRSF002401">
    <property type="entry name" value="GTP_bd_Obg/CgtA"/>
    <property type="match status" value="1"/>
</dbReference>
<dbReference type="PRINTS" id="PR00326">
    <property type="entry name" value="GTP1OBG"/>
</dbReference>
<dbReference type="SUPFAM" id="SSF82051">
    <property type="entry name" value="Obg GTP-binding protein N-terminal domain"/>
    <property type="match status" value="1"/>
</dbReference>
<dbReference type="SUPFAM" id="SSF52540">
    <property type="entry name" value="P-loop containing nucleoside triphosphate hydrolases"/>
    <property type="match status" value="1"/>
</dbReference>
<dbReference type="PROSITE" id="PS51710">
    <property type="entry name" value="G_OBG"/>
    <property type="match status" value="1"/>
</dbReference>
<dbReference type="PROSITE" id="PS00905">
    <property type="entry name" value="GTP1_OBG"/>
    <property type="match status" value="1"/>
</dbReference>
<dbReference type="PROSITE" id="PS51883">
    <property type="entry name" value="OBG"/>
    <property type="match status" value="1"/>
</dbReference>
<reference key="1">
    <citation type="journal article" date="2005" name="Science">
        <title>Life at depth: Photobacterium profundum genome sequence and expression analysis.</title>
        <authorList>
            <person name="Vezzi A."/>
            <person name="Campanaro S."/>
            <person name="D'Angelo M."/>
            <person name="Simonato F."/>
            <person name="Vitulo N."/>
            <person name="Lauro F.M."/>
            <person name="Cestaro A."/>
            <person name="Malacrida G."/>
            <person name="Simionati B."/>
            <person name="Cannata N."/>
            <person name="Romualdi C."/>
            <person name="Bartlett D.H."/>
            <person name="Valle G."/>
        </authorList>
    </citation>
    <scope>NUCLEOTIDE SEQUENCE [LARGE SCALE GENOMIC DNA]</scope>
    <source>
        <strain>ATCC BAA-1253 / SS9</strain>
    </source>
</reference>
<sequence length="390" mass="43186">MKFVDEAVIRADAGDGGNGTVSFRTEKYVPRGGPDGGDGGDGGDVYLLADENVNTLIDFRFERFHAAERGENGRGGNCTGHRGEDKILTVPVGTRAIDEETGEVIADLTDHGVKVMVSKGGFHGLGNTRFKSSVNRAPRQKSMGSKGEIRHLRLELLLLADVGMLGLPNAGKSTFIRSVSAAKPKVADYPFTTLIPSLGVVRVDAERSFVIADIPGLIEGAADGAGLGIRFLKHLERCRVLLHMIDLLPADGSDPVENAFTIINELDKYSDKLANKPRWLIFNKVDLLSEEDTQAKISEVLEALAWEGDYYCISALTRDGTKELTYNLMTTIESLPQNKYDEIEEKVEKVEFKWDDYHAEQIKKAEEDDDDDDWDNWNEDDYDVEIIYKP</sequence>
<name>OBG_PHOPR</name>
<comment type="function">
    <text evidence="1">An essential GTPase which binds GTP, GDP and possibly (p)ppGpp with moderate affinity, with high nucleotide exchange rates and a fairly low GTP hydrolysis rate. Plays a role in control of the cell cycle, stress response, ribosome biogenesis and in those bacteria that undergo differentiation, in morphogenesis control.</text>
</comment>
<comment type="cofactor">
    <cofactor evidence="1">
        <name>Mg(2+)</name>
        <dbReference type="ChEBI" id="CHEBI:18420"/>
    </cofactor>
</comment>
<comment type="subunit">
    <text evidence="1">Monomer.</text>
</comment>
<comment type="subcellular location">
    <subcellularLocation>
        <location evidence="1">Cytoplasm</location>
    </subcellularLocation>
</comment>
<comment type="similarity">
    <text evidence="1">Belongs to the TRAFAC class OBG-HflX-like GTPase superfamily. OBG GTPase family.</text>
</comment>
<organism>
    <name type="scientific">Photobacterium profundum (strain SS9)</name>
    <dbReference type="NCBI Taxonomy" id="298386"/>
    <lineage>
        <taxon>Bacteria</taxon>
        <taxon>Pseudomonadati</taxon>
        <taxon>Pseudomonadota</taxon>
        <taxon>Gammaproteobacteria</taxon>
        <taxon>Vibrionales</taxon>
        <taxon>Vibrionaceae</taxon>
        <taxon>Photobacterium</taxon>
    </lineage>
</organism>
<accession>Q6LV46</accession>
<feature type="chain" id="PRO_0000386121" description="GTPase Obg">
    <location>
        <begin position="1"/>
        <end position="390"/>
    </location>
</feature>
<feature type="domain" description="Obg" evidence="2">
    <location>
        <begin position="1"/>
        <end position="159"/>
    </location>
</feature>
<feature type="domain" description="OBG-type G" evidence="1">
    <location>
        <begin position="160"/>
        <end position="333"/>
    </location>
</feature>
<feature type="region of interest" description="Disordered" evidence="3">
    <location>
        <begin position="22"/>
        <end position="42"/>
    </location>
</feature>
<feature type="compositionally biased region" description="Gly residues" evidence="3">
    <location>
        <begin position="33"/>
        <end position="42"/>
    </location>
</feature>
<feature type="binding site" evidence="1">
    <location>
        <begin position="166"/>
        <end position="173"/>
    </location>
    <ligand>
        <name>GTP</name>
        <dbReference type="ChEBI" id="CHEBI:37565"/>
    </ligand>
</feature>
<feature type="binding site" evidence="1">
    <location>
        <position position="173"/>
    </location>
    <ligand>
        <name>Mg(2+)</name>
        <dbReference type="ChEBI" id="CHEBI:18420"/>
    </ligand>
</feature>
<feature type="binding site" evidence="1">
    <location>
        <begin position="191"/>
        <end position="195"/>
    </location>
    <ligand>
        <name>GTP</name>
        <dbReference type="ChEBI" id="CHEBI:37565"/>
    </ligand>
</feature>
<feature type="binding site" evidence="1">
    <location>
        <position position="193"/>
    </location>
    <ligand>
        <name>Mg(2+)</name>
        <dbReference type="ChEBI" id="CHEBI:18420"/>
    </ligand>
</feature>
<feature type="binding site" evidence="1">
    <location>
        <begin position="213"/>
        <end position="216"/>
    </location>
    <ligand>
        <name>GTP</name>
        <dbReference type="ChEBI" id="CHEBI:37565"/>
    </ligand>
</feature>
<feature type="binding site" evidence="1">
    <location>
        <begin position="283"/>
        <end position="286"/>
    </location>
    <ligand>
        <name>GTP</name>
        <dbReference type="ChEBI" id="CHEBI:37565"/>
    </ligand>
</feature>
<feature type="binding site" evidence="1">
    <location>
        <begin position="314"/>
        <end position="316"/>
    </location>
    <ligand>
        <name>GTP</name>
        <dbReference type="ChEBI" id="CHEBI:37565"/>
    </ligand>
</feature>
<proteinExistence type="inferred from homology"/>
<protein>
    <recommendedName>
        <fullName evidence="1">GTPase Obg</fullName>
        <ecNumber evidence="1">3.6.5.-</ecNumber>
    </recommendedName>
    <alternativeName>
        <fullName evidence="1">GTP-binding protein Obg</fullName>
    </alternativeName>
</protein>
<gene>
    <name evidence="1" type="primary">obg</name>
    <name type="ordered locus">PBPRA0397</name>
</gene>
<keyword id="KW-0963">Cytoplasm</keyword>
<keyword id="KW-0342">GTP-binding</keyword>
<keyword id="KW-0378">Hydrolase</keyword>
<keyword id="KW-0460">Magnesium</keyword>
<keyword id="KW-0479">Metal-binding</keyword>
<keyword id="KW-0547">Nucleotide-binding</keyword>
<keyword id="KW-1185">Reference proteome</keyword>
<evidence type="ECO:0000255" key="1">
    <source>
        <dbReference type="HAMAP-Rule" id="MF_01454"/>
    </source>
</evidence>
<evidence type="ECO:0000255" key="2">
    <source>
        <dbReference type="PROSITE-ProRule" id="PRU01231"/>
    </source>
</evidence>
<evidence type="ECO:0000256" key="3">
    <source>
        <dbReference type="SAM" id="MobiDB-lite"/>
    </source>
</evidence>